<feature type="chain" id="PRO_0000265739" description="Large ribosomal subunit protein uL30">
    <location>
        <begin position="1"/>
        <end position="246"/>
    </location>
</feature>
<feature type="repeat" description="1">
    <location>
        <begin position="7"/>
        <end position="17"/>
    </location>
</feature>
<feature type="repeat" description="2">
    <location>
        <begin position="18"/>
        <end position="28"/>
    </location>
</feature>
<feature type="repeat" description="3">
    <location>
        <begin position="29"/>
        <end position="40"/>
    </location>
</feature>
<feature type="repeat" description="4">
    <location>
        <begin position="41"/>
        <end position="52"/>
    </location>
</feature>
<feature type="region of interest" description="4 X 12 AA tandem repeats">
    <location>
        <begin position="7"/>
        <end position="52"/>
    </location>
</feature>
<feature type="modified residue" description="N-acetylmethionine" evidence="1">
    <location>
        <position position="1"/>
    </location>
</feature>
<keyword id="KW-0002">3D-structure</keyword>
<keyword id="KW-0007">Acetylation</keyword>
<keyword id="KW-0963">Cytoplasm</keyword>
<keyword id="KW-1185">Reference proteome</keyword>
<keyword id="KW-0677">Repeat</keyword>
<keyword id="KW-0687">Ribonucleoprotein</keyword>
<keyword id="KW-0689">Ribosomal protein</keyword>
<keyword id="KW-0694">RNA-binding</keyword>
<comment type="function">
    <text evidence="2">Component of the large ribosomal subunit. The ribosome is a large ribonucleoprotein complex responsible for the synthesis of proteins in the cell. Binds to G-rich structures in 28S rRNA and in mRNAs. Plays a regulatory role in the translation apparatus; inhibits cell-free translation of mRNAs.</text>
</comment>
<comment type="subunit">
    <text evidence="2">Component of the large ribosomal subunit.</text>
</comment>
<comment type="subcellular location">
    <subcellularLocation>
        <location evidence="2">Cytoplasm</location>
    </subcellularLocation>
</comment>
<comment type="similarity">
    <text evidence="3">Belongs to the universal ribosomal protein uL30 family.</text>
</comment>
<name>RL7_CHICK</name>
<reference key="1">
    <citation type="journal article" date="2005" name="Genome Biol.">
        <title>Full-length cDNAs from chicken bursal lymphocytes to facilitate gene function analysis.</title>
        <authorList>
            <person name="Caldwell R.B."/>
            <person name="Kierzek A.M."/>
            <person name="Arakawa H."/>
            <person name="Bezzubov Y."/>
            <person name="Zaim J."/>
            <person name="Fiedler P."/>
            <person name="Kutter S."/>
            <person name="Blagodatski A."/>
            <person name="Kostovska D."/>
            <person name="Koter M."/>
            <person name="Plachy J."/>
            <person name="Carninci P."/>
            <person name="Hayashizaki Y."/>
            <person name="Buerstedde J.-M."/>
        </authorList>
    </citation>
    <scope>NUCLEOTIDE SEQUENCE [LARGE SCALE MRNA]</scope>
    <source>
        <strain>CB</strain>
        <tissue>Bursa of Fabricius</tissue>
    </source>
</reference>
<organism>
    <name type="scientific">Gallus gallus</name>
    <name type="common">Chicken</name>
    <dbReference type="NCBI Taxonomy" id="9031"/>
    <lineage>
        <taxon>Eukaryota</taxon>
        <taxon>Metazoa</taxon>
        <taxon>Chordata</taxon>
        <taxon>Craniata</taxon>
        <taxon>Vertebrata</taxon>
        <taxon>Euteleostomi</taxon>
        <taxon>Archelosauria</taxon>
        <taxon>Archosauria</taxon>
        <taxon>Dinosauria</taxon>
        <taxon>Saurischia</taxon>
        <taxon>Theropoda</taxon>
        <taxon>Coelurosauria</taxon>
        <taxon>Aves</taxon>
        <taxon>Neognathae</taxon>
        <taxon>Galloanserae</taxon>
        <taxon>Galliformes</taxon>
        <taxon>Phasianidae</taxon>
        <taxon>Phasianinae</taxon>
        <taxon>Gallus</taxon>
    </lineage>
</organism>
<evidence type="ECO:0000250" key="1"/>
<evidence type="ECO:0000250" key="2">
    <source>
        <dbReference type="UniProtKB" id="P18124"/>
    </source>
</evidence>
<evidence type="ECO:0000305" key="3"/>
<proteinExistence type="evidence at protein level"/>
<dbReference type="EMBL" id="AJ720578">
    <property type="protein sequence ID" value="CAG32237.1"/>
    <property type="molecule type" value="mRNA"/>
</dbReference>
<dbReference type="RefSeq" id="NP_001006345.1">
    <property type="nucleotide sequence ID" value="NM_001006345.3"/>
</dbReference>
<dbReference type="RefSeq" id="XP_015138265.1">
    <property type="nucleotide sequence ID" value="XM_015282779.1"/>
</dbReference>
<dbReference type="RefSeq" id="XP_040533537.1">
    <property type="nucleotide sequence ID" value="XM_040677603.2"/>
</dbReference>
<dbReference type="RefSeq" id="XP_046766565.1">
    <property type="nucleotide sequence ID" value="XM_046910609.1"/>
</dbReference>
<dbReference type="PDB" id="8Q7Z">
    <property type="method" value="EM"/>
    <property type="resolution" value="2.50 A"/>
    <property type="chains" value="BF=1-246"/>
</dbReference>
<dbReference type="PDB" id="8Q87">
    <property type="method" value="EM"/>
    <property type="resolution" value="2.40 A"/>
    <property type="chains" value="BF=1-246"/>
</dbReference>
<dbReference type="PDBsum" id="8Q7Z"/>
<dbReference type="PDBsum" id="8Q87"/>
<dbReference type="SMR" id="Q5ZJ56"/>
<dbReference type="BioGRID" id="681182">
    <property type="interactions" value="1"/>
</dbReference>
<dbReference type="FunCoup" id="Q5ZJ56">
    <property type="interactions" value="2180"/>
</dbReference>
<dbReference type="STRING" id="9031.ENSGALP00000050852"/>
<dbReference type="PaxDb" id="9031-ENSGALP00000025165"/>
<dbReference type="GeneID" id="420182"/>
<dbReference type="KEGG" id="gga:420182"/>
<dbReference type="CTD" id="6129"/>
<dbReference type="VEuPathDB" id="HostDB:geneid_420182"/>
<dbReference type="eggNOG" id="KOG3184">
    <property type="taxonomic scope" value="Eukaryota"/>
</dbReference>
<dbReference type="InParanoid" id="Q5ZJ56"/>
<dbReference type="OMA" id="IVEPWIA"/>
<dbReference type="OrthoDB" id="28644at2759"/>
<dbReference type="PhylomeDB" id="Q5ZJ56"/>
<dbReference type="Reactome" id="R-GGA-1799339">
    <property type="pathway name" value="SRP-dependent cotranslational protein targeting to membrane"/>
</dbReference>
<dbReference type="Reactome" id="R-GGA-72689">
    <property type="pathway name" value="Formation of a pool of free 40S subunits"/>
</dbReference>
<dbReference type="Reactome" id="R-GGA-72706">
    <property type="pathway name" value="GTP hydrolysis and joining of the 60S ribosomal subunit"/>
</dbReference>
<dbReference type="Reactome" id="R-GGA-975956">
    <property type="pathway name" value="Nonsense Mediated Decay (NMD) independent of the Exon Junction Complex (EJC)"/>
</dbReference>
<dbReference type="Reactome" id="R-GGA-975957">
    <property type="pathway name" value="Nonsense Mediated Decay (NMD) enhanced by the Exon Junction Complex (EJC)"/>
</dbReference>
<dbReference type="PRO" id="PR:Q5ZJ56"/>
<dbReference type="Proteomes" id="UP000000539">
    <property type="component" value="Chromosome 2"/>
</dbReference>
<dbReference type="Bgee" id="ENSGALG00000035252">
    <property type="expression patterns" value="Expressed in spleen and 13 other cell types or tissues"/>
</dbReference>
<dbReference type="GO" id="GO:0022625">
    <property type="term" value="C:cytosolic large ribosomal subunit"/>
    <property type="evidence" value="ECO:0000318"/>
    <property type="project" value="GO_Central"/>
</dbReference>
<dbReference type="GO" id="GO:0003723">
    <property type="term" value="F:RNA binding"/>
    <property type="evidence" value="ECO:0000318"/>
    <property type="project" value="GO_Central"/>
</dbReference>
<dbReference type="GO" id="GO:0003735">
    <property type="term" value="F:structural constituent of ribosome"/>
    <property type="evidence" value="ECO:0000318"/>
    <property type="project" value="GO_Central"/>
</dbReference>
<dbReference type="GO" id="GO:0000463">
    <property type="term" value="P:maturation of LSU-rRNA from tricistronic rRNA transcript (SSU-rRNA, 5.8S rRNA, LSU-rRNA)"/>
    <property type="evidence" value="ECO:0000318"/>
    <property type="project" value="GO_Central"/>
</dbReference>
<dbReference type="CDD" id="cd01657">
    <property type="entry name" value="Ribosomal_L7_archeal_euk"/>
    <property type="match status" value="1"/>
</dbReference>
<dbReference type="FunFam" id="1.10.15.30:FF:000001">
    <property type="entry name" value="60S ribosomal protein L7"/>
    <property type="match status" value="1"/>
</dbReference>
<dbReference type="FunFam" id="3.30.1390.20:FF:000002">
    <property type="entry name" value="60S ribosomal protein L7"/>
    <property type="match status" value="1"/>
</dbReference>
<dbReference type="FunFam" id="3.30.1390.20:FF:000003">
    <property type="entry name" value="60S ribosomal protein L7"/>
    <property type="match status" value="1"/>
</dbReference>
<dbReference type="Gene3D" id="1.10.15.30">
    <property type="match status" value="1"/>
</dbReference>
<dbReference type="Gene3D" id="3.30.1390.20">
    <property type="entry name" value="Ribosomal protein L30, ferredoxin-like fold domain"/>
    <property type="match status" value="1"/>
</dbReference>
<dbReference type="InterPro" id="IPR036919">
    <property type="entry name" value="Ribo_uL30_ferredoxin-like_sf"/>
</dbReference>
<dbReference type="InterPro" id="IPR039699">
    <property type="entry name" value="Ribosomal_uL30"/>
</dbReference>
<dbReference type="InterPro" id="IPR018038">
    <property type="entry name" value="Ribosomal_uL30_CS"/>
</dbReference>
<dbReference type="InterPro" id="IPR005998">
    <property type="entry name" value="Ribosomal_uL30_euk"/>
</dbReference>
<dbReference type="InterPro" id="IPR035808">
    <property type="entry name" value="Ribosomal_uL30_euk_arc"/>
</dbReference>
<dbReference type="InterPro" id="IPR016082">
    <property type="entry name" value="Ribosomal_uL30_ferredoxin-like"/>
</dbReference>
<dbReference type="InterPro" id="IPR012988">
    <property type="entry name" value="Ribosomal_uL30_N_euk"/>
</dbReference>
<dbReference type="NCBIfam" id="TIGR01310">
    <property type="entry name" value="uL30_euk"/>
    <property type="match status" value="1"/>
</dbReference>
<dbReference type="PANTHER" id="PTHR11524">
    <property type="entry name" value="60S RIBOSOMAL PROTEIN L7"/>
    <property type="match status" value="1"/>
</dbReference>
<dbReference type="PANTHER" id="PTHR11524:SF12">
    <property type="entry name" value="LARGE RIBOSOMAL SUBUNIT PROTEIN UL30"/>
    <property type="match status" value="1"/>
</dbReference>
<dbReference type="Pfam" id="PF00327">
    <property type="entry name" value="Ribosomal_L30"/>
    <property type="match status" value="1"/>
</dbReference>
<dbReference type="Pfam" id="PF08079">
    <property type="entry name" value="Ribosomal_L30_N"/>
    <property type="match status" value="1"/>
</dbReference>
<dbReference type="SUPFAM" id="SSF55129">
    <property type="entry name" value="Ribosomal protein L30p/L7e"/>
    <property type="match status" value="1"/>
</dbReference>
<dbReference type="PROSITE" id="PS00634">
    <property type="entry name" value="RIBOSOMAL_L30"/>
    <property type="match status" value="1"/>
</dbReference>
<accession>Q5ZJ56</accession>
<gene>
    <name type="primary">RPL7</name>
    <name type="ORF">RCJMB04_20k1</name>
</gene>
<protein>
    <recommendedName>
        <fullName evidence="3">Large ribosomal subunit protein uL30</fullName>
    </recommendedName>
    <alternativeName>
        <fullName>60S ribosomal protein L7</fullName>
    </alternativeName>
</protein>
<sequence length="246" mass="28780">MADKEAKKVPSVPESLLKRRQAYAAAKAKRLKRLLAQKKFRKAQRKIIYERAKAYHKEYRHMYRQEIRMARMARKAGNYYVPAEPKLAFVIRIRGINGVSPKVRKVLQLLRLRQIFNGTFVKLNKASINMLRIVEPYIAWGYPNLKSVHDLIYKRGYGKINKKRIALTDNSLIRKRLGKLGIICMEDVIHEIYTVGKNFKVVNNFLWPFKLSSPRGGMKKKTIHFVEGGDAGNREDQINRLIRRMN</sequence>